<keyword id="KW-0131">Cell cycle</keyword>
<keyword id="KW-0132">Cell division</keyword>
<keyword id="KW-0133">Cell shape</keyword>
<keyword id="KW-0961">Cell wall biogenesis/degradation</keyword>
<keyword id="KW-0963">Cytoplasm</keyword>
<keyword id="KW-0573">Peptidoglycan synthesis</keyword>
<keyword id="KW-0670">Pyruvate</keyword>
<keyword id="KW-1185">Reference proteome</keyword>
<keyword id="KW-0808">Transferase</keyword>
<protein>
    <recommendedName>
        <fullName evidence="1">UDP-N-acetylglucosamine 1-carboxyvinyltransferase</fullName>
        <ecNumber evidence="1">2.5.1.7</ecNumber>
    </recommendedName>
    <alternativeName>
        <fullName evidence="1">Enoylpyruvate transferase</fullName>
    </alternativeName>
    <alternativeName>
        <fullName evidence="1">UDP-N-acetylglucosamine enolpyruvyl transferase</fullName>
        <shortName evidence="1">EPT</shortName>
    </alternativeName>
</protein>
<proteinExistence type="inferred from homology"/>
<reference key="1">
    <citation type="journal article" date="2003" name="Nat. Biotechnol.">
        <title>The genome sequence of the entomopathogenic bacterium Photorhabdus luminescens.</title>
        <authorList>
            <person name="Duchaud E."/>
            <person name="Rusniok C."/>
            <person name="Frangeul L."/>
            <person name="Buchrieser C."/>
            <person name="Givaudan A."/>
            <person name="Taourit S."/>
            <person name="Bocs S."/>
            <person name="Boursaux-Eude C."/>
            <person name="Chandler M."/>
            <person name="Charles J.-F."/>
            <person name="Dassa E."/>
            <person name="Derose R."/>
            <person name="Derzelle S."/>
            <person name="Freyssinet G."/>
            <person name="Gaudriault S."/>
            <person name="Medigue C."/>
            <person name="Lanois A."/>
            <person name="Powell K."/>
            <person name="Siguier P."/>
            <person name="Vincent R."/>
            <person name="Wingate V."/>
            <person name="Zouine M."/>
            <person name="Glaser P."/>
            <person name="Boemare N."/>
            <person name="Danchin A."/>
            <person name="Kunst F."/>
        </authorList>
    </citation>
    <scope>NUCLEOTIDE SEQUENCE [LARGE SCALE GENOMIC DNA]</scope>
    <source>
        <strain>DSM 15139 / CIP 105565 / TT01</strain>
    </source>
</reference>
<feature type="chain" id="PRO_0000231238" description="UDP-N-acetylglucosamine 1-carboxyvinyltransferase">
    <location>
        <begin position="1"/>
        <end position="421"/>
    </location>
</feature>
<feature type="active site" description="Proton donor" evidence="1">
    <location>
        <position position="115"/>
    </location>
</feature>
<feature type="binding site" evidence="1">
    <location>
        <begin position="22"/>
        <end position="23"/>
    </location>
    <ligand>
        <name>phosphoenolpyruvate</name>
        <dbReference type="ChEBI" id="CHEBI:58702"/>
    </ligand>
</feature>
<feature type="binding site" evidence="1">
    <location>
        <position position="91"/>
    </location>
    <ligand>
        <name>UDP-N-acetyl-alpha-D-glucosamine</name>
        <dbReference type="ChEBI" id="CHEBI:57705"/>
    </ligand>
</feature>
<feature type="binding site" evidence="1">
    <location>
        <begin position="120"/>
        <end position="124"/>
    </location>
    <ligand>
        <name>UDP-N-acetyl-alpha-D-glucosamine</name>
        <dbReference type="ChEBI" id="CHEBI:57705"/>
    </ligand>
</feature>
<feature type="binding site" evidence="1">
    <location>
        <begin position="160"/>
        <end position="163"/>
    </location>
    <ligand>
        <name>UDP-N-acetyl-alpha-D-glucosamine</name>
        <dbReference type="ChEBI" id="CHEBI:57705"/>
    </ligand>
</feature>
<feature type="binding site" evidence="1">
    <location>
        <position position="305"/>
    </location>
    <ligand>
        <name>UDP-N-acetyl-alpha-D-glucosamine</name>
        <dbReference type="ChEBI" id="CHEBI:57705"/>
    </ligand>
</feature>
<feature type="binding site" evidence="1">
    <location>
        <position position="327"/>
    </location>
    <ligand>
        <name>UDP-N-acetyl-alpha-D-glucosamine</name>
        <dbReference type="ChEBI" id="CHEBI:57705"/>
    </ligand>
</feature>
<feature type="modified residue" description="2-(S-cysteinyl)pyruvic acid O-phosphothioketal" evidence="1">
    <location>
        <position position="115"/>
    </location>
</feature>
<name>MURA_PHOLL</name>
<evidence type="ECO:0000255" key="1">
    <source>
        <dbReference type="HAMAP-Rule" id="MF_00111"/>
    </source>
</evidence>
<comment type="function">
    <text evidence="1">Cell wall formation. Adds enolpyruvyl to UDP-N-acetylglucosamine.</text>
</comment>
<comment type="catalytic activity">
    <reaction evidence="1">
        <text>phosphoenolpyruvate + UDP-N-acetyl-alpha-D-glucosamine = UDP-N-acetyl-3-O-(1-carboxyvinyl)-alpha-D-glucosamine + phosphate</text>
        <dbReference type="Rhea" id="RHEA:18681"/>
        <dbReference type="ChEBI" id="CHEBI:43474"/>
        <dbReference type="ChEBI" id="CHEBI:57705"/>
        <dbReference type="ChEBI" id="CHEBI:58702"/>
        <dbReference type="ChEBI" id="CHEBI:68483"/>
        <dbReference type="EC" id="2.5.1.7"/>
    </reaction>
</comment>
<comment type="pathway">
    <text evidence="1">Cell wall biogenesis; peptidoglycan biosynthesis.</text>
</comment>
<comment type="subcellular location">
    <subcellularLocation>
        <location evidence="1">Cytoplasm</location>
    </subcellularLocation>
</comment>
<comment type="similarity">
    <text evidence="1">Belongs to the EPSP synthase family. MurA subfamily.</text>
</comment>
<dbReference type="EC" id="2.5.1.7" evidence="1"/>
<dbReference type="EMBL" id="BX571872">
    <property type="protein sequence ID" value="CAE16400.1"/>
    <property type="molecule type" value="Genomic_DNA"/>
</dbReference>
<dbReference type="RefSeq" id="WP_011148157.1">
    <property type="nucleotide sequence ID" value="NC_005126.1"/>
</dbReference>
<dbReference type="SMR" id="Q7N068"/>
<dbReference type="STRING" id="243265.plu4028"/>
<dbReference type="GeneID" id="48850251"/>
<dbReference type="KEGG" id="plu:plu4028"/>
<dbReference type="eggNOG" id="COG0766">
    <property type="taxonomic scope" value="Bacteria"/>
</dbReference>
<dbReference type="HOGENOM" id="CLU_027387_0_0_6"/>
<dbReference type="OrthoDB" id="9803760at2"/>
<dbReference type="UniPathway" id="UPA00219"/>
<dbReference type="Proteomes" id="UP000002514">
    <property type="component" value="Chromosome"/>
</dbReference>
<dbReference type="GO" id="GO:0005737">
    <property type="term" value="C:cytoplasm"/>
    <property type="evidence" value="ECO:0007669"/>
    <property type="project" value="UniProtKB-SubCell"/>
</dbReference>
<dbReference type="GO" id="GO:0008760">
    <property type="term" value="F:UDP-N-acetylglucosamine 1-carboxyvinyltransferase activity"/>
    <property type="evidence" value="ECO:0007669"/>
    <property type="project" value="UniProtKB-UniRule"/>
</dbReference>
<dbReference type="GO" id="GO:0051301">
    <property type="term" value="P:cell division"/>
    <property type="evidence" value="ECO:0007669"/>
    <property type="project" value="UniProtKB-KW"/>
</dbReference>
<dbReference type="GO" id="GO:0071555">
    <property type="term" value="P:cell wall organization"/>
    <property type="evidence" value="ECO:0007669"/>
    <property type="project" value="UniProtKB-KW"/>
</dbReference>
<dbReference type="GO" id="GO:0009252">
    <property type="term" value="P:peptidoglycan biosynthetic process"/>
    <property type="evidence" value="ECO:0007669"/>
    <property type="project" value="UniProtKB-UniRule"/>
</dbReference>
<dbReference type="GO" id="GO:0008360">
    <property type="term" value="P:regulation of cell shape"/>
    <property type="evidence" value="ECO:0007669"/>
    <property type="project" value="UniProtKB-KW"/>
</dbReference>
<dbReference type="GO" id="GO:0019277">
    <property type="term" value="P:UDP-N-acetylgalactosamine biosynthetic process"/>
    <property type="evidence" value="ECO:0007669"/>
    <property type="project" value="InterPro"/>
</dbReference>
<dbReference type="CDD" id="cd01555">
    <property type="entry name" value="UdpNAET"/>
    <property type="match status" value="1"/>
</dbReference>
<dbReference type="FunFam" id="3.65.10.10:FF:000002">
    <property type="entry name" value="UDP-N-acetylglucosamine 1-carboxyvinyltransferase"/>
    <property type="match status" value="1"/>
</dbReference>
<dbReference type="Gene3D" id="3.65.10.10">
    <property type="entry name" value="Enolpyruvate transferase domain"/>
    <property type="match status" value="2"/>
</dbReference>
<dbReference type="HAMAP" id="MF_00111">
    <property type="entry name" value="MurA"/>
    <property type="match status" value="1"/>
</dbReference>
<dbReference type="InterPro" id="IPR001986">
    <property type="entry name" value="Enolpyruvate_Tfrase_dom"/>
</dbReference>
<dbReference type="InterPro" id="IPR036968">
    <property type="entry name" value="Enolpyruvate_Tfrase_sf"/>
</dbReference>
<dbReference type="InterPro" id="IPR050068">
    <property type="entry name" value="MurA_subfamily"/>
</dbReference>
<dbReference type="InterPro" id="IPR013792">
    <property type="entry name" value="RNA3'P_cycl/enolpyr_Trfase_a/b"/>
</dbReference>
<dbReference type="InterPro" id="IPR005750">
    <property type="entry name" value="UDP_GlcNAc_COvinyl_MurA"/>
</dbReference>
<dbReference type="NCBIfam" id="TIGR01072">
    <property type="entry name" value="murA"/>
    <property type="match status" value="1"/>
</dbReference>
<dbReference type="NCBIfam" id="NF006873">
    <property type="entry name" value="PRK09369.1"/>
    <property type="match status" value="1"/>
</dbReference>
<dbReference type="PANTHER" id="PTHR43783">
    <property type="entry name" value="UDP-N-ACETYLGLUCOSAMINE 1-CARBOXYVINYLTRANSFERASE"/>
    <property type="match status" value="1"/>
</dbReference>
<dbReference type="PANTHER" id="PTHR43783:SF1">
    <property type="entry name" value="UDP-N-ACETYLGLUCOSAMINE 1-CARBOXYVINYLTRANSFERASE"/>
    <property type="match status" value="1"/>
</dbReference>
<dbReference type="Pfam" id="PF00275">
    <property type="entry name" value="EPSP_synthase"/>
    <property type="match status" value="1"/>
</dbReference>
<dbReference type="SUPFAM" id="SSF55205">
    <property type="entry name" value="EPT/RTPC-like"/>
    <property type="match status" value="1"/>
</dbReference>
<gene>
    <name evidence="1" type="primary">murA</name>
    <name type="ordered locus">plu4028</name>
</gene>
<accession>Q7N068</accession>
<sequence>MDKFRVKGPTRLSGEVTISGAKNAALPILFAALLAEEPVELQNVPELKDIDTTIKLLNRLGTKVERNGSVFVDARDVNQYCAPYELVKTMRASIWALGPLVARFGQGQVSLPGGCAIGARPVDLHISGLEQLGAEIVLEEGYVKASVNGRLKGACIVMDKVSVGATVTIMTAATLAEGTTVIENAAREPEIEDTANFLNTLGAKITGAGTDHITIEGVERLGGGVYRVLPDRIETGTFLVAAAISGGKVVCRHAQPNTLDAVLAKLREAGADIAIGKDWVSLDMHGKRPKAVTLRTAPHPGFPTDMQAQFSLLNLVAEGAGMITETIFENRFMHIPELIRMGAHAEIESNTVLCHGVKKLSCAQVMATDLRASASLVLAGCIAEGVTVVDRIYHIDRGYEHIEDKLRGLGANIERVKSTGK</sequence>
<organism>
    <name type="scientific">Photorhabdus laumondii subsp. laumondii (strain DSM 15139 / CIP 105565 / TT01)</name>
    <name type="common">Photorhabdus luminescens subsp. laumondii</name>
    <dbReference type="NCBI Taxonomy" id="243265"/>
    <lineage>
        <taxon>Bacteria</taxon>
        <taxon>Pseudomonadati</taxon>
        <taxon>Pseudomonadota</taxon>
        <taxon>Gammaproteobacteria</taxon>
        <taxon>Enterobacterales</taxon>
        <taxon>Morganellaceae</taxon>
        <taxon>Photorhabdus</taxon>
    </lineage>
</organism>